<evidence type="ECO:0000250" key="1"/>
<accession>P0AC45</accession>
<accession>P10445</accession>
<feature type="chain" id="PRO_0000158674" description="Succinate dehydrogenase hydrophobic membrane anchor subunit">
    <location>
        <begin position="1"/>
        <end position="115"/>
    </location>
</feature>
<feature type="topological domain" description="Cytoplasmic" evidence="1">
    <location>
        <begin position="1"/>
        <end position="15"/>
    </location>
</feature>
<feature type="transmembrane region" description="Helical" evidence="1">
    <location>
        <begin position="16"/>
        <end position="36"/>
    </location>
</feature>
<feature type="topological domain" description="Periplasmic" evidence="1">
    <location>
        <begin position="37"/>
        <end position="58"/>
    </location>
</feature>
<feature type="transmembrane region" description="Helical" evidence="1">
    <location>
        <begin position="59"/>
        <end position="80"/>
    </location>
</feature>
<feature type="topological domain" description="Cytoplasmic" evidence="1">
    <location>
        <begin position="81"/>
        <end position="90"/>
    </location>
</feature>
<feature type="transmembrane region" description="Helical" evidence="1">
    <location>
        <begin position="91"/>
        <end position="115"/>
    </location>
</feature>
<feature type="binding site" description="axial binding residue" evidence="1">
    <location>
        <position position="71"/>
    </location>
    <ligand>
        <name>heme</name>
        <dbReference type="ChEBI" id="CHEBI:30413"/>
        <note>ligand shared with second transmembrane subunit</note>
    </ligand>
    <ligandPart>
        <name>Fe</name>
        <dbReference type="ChEBI" id="CHEBI:18248"/>
    </ligandPart>
</feature>
<feature type="binding site" evidence="1">
    <location>
        <position position="83"/>
    </location>
    <ligand>
        <name>a ubiquinone</name>
        <dbReference type="ChEBI" id="CHEBI:16389"/>
    </ligand>
</feature>
<sequence>MVSNASALGRNGVHDFILVRATAIVLTLYIIYMVGFFATSGELTYEVWIGFFASAFTKVFTLLALFSILIHAWIGMWQVLTDYVKPLALRLMLQLVIVVALVVYVIYGFVVVWGV</sequence>
<proteinExistence type="inferred from homology"/>
<reference key="1">
    <citation type="journal article" date="2002" name="Proc. Natl. Acad. Sci. U.S.A.">
        <title>Extensive mosaic structure revealed by the complete genome sequence of uropathogenic Escherichia coli.</title>
        <authorList>
            <person name="Welch R.A."/>
            <person name="Burland V."/>
            <person name="Plunkett G. III"/>
            <person name="Redford P."/>
            <person name="Roesch P."/>
            <person name="Rasko D."/>
            <person name="Buckles E.L."/>
            <person name="Liou S.-R."/>
            <person name="Boutin A."/>
            <person name="Hackett J."/>
            <person name="Stroud D."/>
            <person name="Mayhew G.F."/>
            <person name="Rose D.J."/>
            <person name="Zhou S."/>
            <person name="Schwartz D.C."/>
            <person name="Perna N.T."/>
            <person name="Mobley H.L.T."/>
            <person name="Donnenberg M.S."/>
            <person name="Blattner F.R."/>
        </authorList>
    </citation>
    <scope>NUCLEOTIDE SEQUENCE [LARGE SCALE GENOMIC DNA]</scope>
    <source>
        <strain>CFT073 / ATCC 700928 / UPEC</strain>
    </source>
</reference>
<comment type="function">
    <text evidence="1">Membrane-anchoring subunit of succinate dehydrogenase (SDH).</text>
</comment>
<comment type="cofactor">
    <cofactor evidence="1">
        <name>heme</name>
        <dbReference type="ChEBI" id="CHEBI:30413"/>
    </cofactor>
    <text evidence="1">The heme is bound between the two transmembrane subunits.</text>
</comment>
<comment type="pathway">
    <text>Carbohydrate metabolism; tricarboxylic acid cycle.</text>
</comment>
<comment type="subunit">
    <text evidence="1">Part of an enzyme complex containing four subunits: a flavoprotein, an iron-sulfur protein, plus two membrane-anchoring proteins, SdhC and SdhD. The complex can form homotrimers (By similarity).</text>
</comment>
<comment type="subcellular location">
    <subcellularLocation>
        <location evidence="1">Cell inner membrane</location>
        <topology evidence="1">Multi-pass membrane protein</topology>
    </subcellularLocation>
</comment>
<organism>
    <name type="scientific">Escherichia coli O6:H1 (strain CFT073 / ATCC 700928 / UPEC)</name>
    <dbReference type="NCBI Taxonomy" id="199310"/>
    <lineage>
        <taxon>Bacteria</taxon>
        <taxon>Pseudomonadati</taxon>
        <taxon>Pseudomonadota</taxon>
        <taxon>Gammaproteobacteria</taxon>
        <taxon>Enterobacterales</taxon>
        <taxon>Enterobacteriaceae</taxon>
        <taxon>Escherichia</taxon>
    </lineage>
</organism>
<dbReference type="EMBL" id="AE014075">
    <property type="protein sequence ID" value="AAN79273.1"/>
    <property type="molecule type" value="Genomic_DNA"/>
</dbReference>
<dbReference type="RefSeq" id="WP_000254365.1">
    <property type="nucleotide sequence ID" value="NZ_CP051263.1"/>
</dbReference>
<dbReference type="SMR" id="P0AC45"/>
<dbReference type="STRING" id="199310.c0800"/>
<dbReference type="GeneID" id="93776762"/>
<dbReference type="KEGG" id="ecc:c0800"/>
<dbReference type="eggNOG" id="COG2142">
    <property type="taxonomic scope" value="Bacteria"/>
</dbReference>
<dbReference type="HOGENOM" id="CLU_151315_2_0_6"/>
<dbReference type="BioCyc" id="ECOL199310:C0800-MONOMER"/>
<dbReference type="UniPathway" id="UPA00223"/>
<dbReference type="Proteomes" id="UP000001410">
    <property type="component" value="Chromosome"/>
</dbReference>
<dbReference type="GO" id="GO:0005886">
    <property type="term" value="C:plasma membrane"/>
    <property type="evidence" value="ECO:0007669"/>
    <property type="project" value="UniProtKB-SubCell"/>
</dbReference>
<dbReference type="GO" id="GO:0009055">
    <property type="term" value="F:electron transfer activity"/>
    <property type="evidence" value="ECO:0007669"/>
    <property type="project" value="TreeGrafter"/>
</dbReference>
<dbReference type="GO" id="GO:0020037">
    <property type="term" value="F:heme binding"/>
    <property type="evidence" value="ECO:0007669"/>
    <property type="project" value="InterPro"/>
</dbReference>
<dbReference type="GO" id="GO:0046872">
    <property type="term" value="F:metal ion binding"/>
    <property type="evidence" value="ECO:0007669"/>
    <property type="project" value="UniProtKB-KW"/>
</dbReference>
<dbReference type="GO" id="GO:0017004">
    <property type="term" value="P:cytochrome complex assembly"/>
    <property type="evidence" value="ECO:0007669"/>
    <property type="project" value="TreeGrafter"/>
</dbReference>
<dbReference type="GO" id="GO:0006099">
    <property type="term" value="P:tricarboxylic acid cycle"/>
    <property type="evidence" value="ECO:0007669"/>
    <property type="project" value="UniProtKB-UniPathway"/>
</dbReference>
<dbReference type="CDD" id="cd03494">
    <property type="entry name" value="SQR_TypeC_SdhD"/>
    <property type="match status" value="1"/>
</dbReference>
<dbReference type="FunFam" id="1.20.1300.10:FF:000001">
    <property type="entry name" value="Succinate dehydrogenase hydrophobic membrane anchor subunit"/>
    <property type="match status" value="1"/>
</dbReference>
<dbReference type="Gene3D" id="1.20.1300.10">
    <property type="entry name" value="Fumarate reductase/succinate dehydrogenase, transmembrane subunit"/>
    <property type="match status" value="1"/>
</dbReference>
<dbReference type="InterPro" id="IPR034804">
    <property type="entry name" value="SQR/QFR_C/D"/>
</dbReference>
<dbReference type="InterPro" id="IPR014312">
    <property type="entry name" value="Succ_DH_anchor"/>
</dbReference>
<dbReference type="InterPro" id="IPR000701">
    <property type="entry name" value="SuccDH_FuR_B_TM-su"/>
</dbReference>
<dbReference type="NCBIfam" id="NF007022">
    <property type="entry name" value="PRK09488.1"/>
    <property type="match status" value="1"/>
</dbReference>
<dbReference type="NCBIfam" id="TIGR02968">
    <property type="entry name" value="succ_dehyd_anc"/>
    <property type="match status" value="1"/>
</dbReference>
<dbReference type="PANTHER" id="PTHR38689">
    <property type="entry name" value="SUCCINATE DEHYDROGENASE HYDROPHOBIC MEMBRANE ANCHOR SUBUNIT"/>
    <property type="match status" value="1"/>
</dbReference>
<dbReference type="PANTHER" id="PTHR38689:SF1">
    <property type="entry name" value="SUCCINATE DEHYDROGENASE HYDROPHOBIC MEMBRANE ANCHOR SUBUNIT"/>
    <property type="match status" value="1"/>
</dbReference>
<dbReference type="Pfam" id="PF01127">
    <property type="entry name" value="Sdh_cyt"/>
    <property type="match status" value="1"/>
</dbReference>
<dbReference type="PIRSF" id="PIRSF000169">
    <property type="entry name" value="SDH_D"/>
    <property type="match status" value="1"/>
</dbReference>
<dbReference type="SUPFAM" id="SSF81343">
    <property type="entry name" value="Fumarate reductase respiratory complex transmembrane subunits"/>
    <property type="match status" value="1"/>
</dbReference>
<keyword id="KW-0997">Cell inner membrane</keyword>
<keyword id="KW-1003">Cell membrane</keyword>
<keyword id="KW-0249">Electron transport</keyword>
<keyword id="KW-0349">Heme</keyword>
<keyword id="KW-0408">Iron</keyword>
<keyword id="KW-0472">Membrane</keyword>
<keyword id="KW-0479">Metal-binding</keyword>
<keyword id="KW-1185">Reference proteome</keyword>
<keyword id="KW-0812">Transmembrane</keyword>
<keyword id="KW-1133">Transmembrane helix</keyword>
<keyword id="KW-0813">Transport</keyword>
<keyword id="KW-0816">Tricarboxylic acid cycle</keyword>
<gene>
    <name type="primary">sdhD</name>
    <name type="ordered locus">c0800</name>
</gene>
<protein>
    <recommendedName>
        <fullName>Succinate dehydrogenase hydrophobic membrane anchor subunit</fullName>
    </recommendedName>
</protein>
<name>DHSD_ECOL6</name>